<protein>
    <recommendedName>
        <fullName>Homeobox protein Hox-B5</fullName>
    </recommendedName>
    <alternativeName>
        <fullName>Homeobox protein Hox-2.1</fullName>
        <shortName>OHox-2.1</shortName>
    </alternativeName>
</protein>
<organism>
    <name type="scientific">Ovis aries</name>
    <name type="common">Sheep</name>
    <dbReference type="NCBI Taxonomy" id="9940"/>
    <lineage>
        <taxon>Eukaryota</taxon>
        <taxon>Metazoa</taxon>
        <taxon>Chordata</taxon>
        <taxon>Craniata</taxon>
        <taxon>Vertebrata</taxon>
        <taxon>Euteleostomi</taxon>
        <taxon>Mammalia</taxon>
        <taxon>Eutheria</taxon>
        <taxon>Laurasiatheria</taxon>
        <taxon>Artiodactyla</taxon>
        <taxon>Ruminantia</taxon>
        <taxon>Pecora</taxon>
        <taxon>Bovidae</taxon>
        <taxon>Caprinae</taxon>
        <taxon>Ovis</taxon>
    </lineage>
</organism>
<dbReference type="EMBL" id="M29537">
    <property type="protein sequence ID" value="AAA31537.1"/>
    <property type="molecule type" value="Genomic_DNA"/>
</dbReference>
<dbReference type="PIR" id="JT0273">
    <property type="entry name" value="JT0273"/>
</dbReference>
<dbReference type="SMR" id="P14157"/>
<dbReference type="Proteomes" id="UP000002356">
    <property type="component" value="Unplaced"/>
</dbReference>
<dbReference type="GO" id="GO:0005634">
    <property type="term" value="C:nucleus"/>
    <property type="evidence" value="ECO:0007669"/>
    <property type="project" value="UniProtKB-SubCell"/>
</dbReference>
<dbReference type="GO" id="GO:0000981">
    <property type="term" value="F:DNA-binding transcription factor activity, RNA polymerase II-specific"/>
    <property type="evidence" value="ECO:0007669"/>
    <property type="project" value="TreeGrafter"/>
</dbReference>
<dbReference type="GO" id="GO:0000978">
    <property type="term" value="F:RNA polymerase II cis-regulatory region sequence-specific DNA binding"/>
    <property type="evidence" value="ECO:0007669"/>
    <property type="project" value="TreeGrafter"/>
</dbReference>
<dbReference type="GO" id="GO:0009952">
    <property type="term" value="P:anterior/posterior pattern specification"/>
    <property type="evidence" value="ECO:0007669"/>
    <property type="project" value="TreeGrafter"/>
</dbReference>
<dbReference type="CDD" id="cd00086">
    <property type="entry name" value="homeodomain"/>
    <property type="match status" value="1"/>
</dbReference>
<dbReference type="Gene3D" id="1.10.10.60">
    <property type="entry name" value="Homeodomain-like"/>
    <property type="match status" value="1"/>
</dbReference>
<dbReference type="InterPro" id="IPR050296">
    <property type="entry name" value="Antp_homeobox"/>
</dbReference>
<dbReference type="InterPro" id="IPR001356">
    <property type="entry name" value="HD"/>
</dbReference>
<dbReference type="InterPro" id="IPR009057">
    <property type="entry name" value="Homeodomain-like_sf"/>
</dbReference>
<dbReference type="PANTHER" id="PTHR45659">
    <property type="entry name" value="HOMEOBOX PROTEIN HOX"/>
    <property type="match status" value="1"/>
</dbReference>
<dbReference type="PANTHER" id="PTHR45659:SF2">
    <property type="entry name" value="HOMEOBOX PROTEIN HOX-B5"/>
    <property type="match status" value="1"/>
</dbReference>
<dbReference type="Pfam" id="PF00046">
    <property type="entry name" value="Homeodomain"/>
    <property type="match status" value="1"/>
</dbReference>
<dbReference type="SUPFAM" id="SSF46689">
    <property type="entry name" value="Homeodomain-like"/>
    <property type="match status" value="1"/>
</dbReference>
<dbReference type="PROSITE" id="PS50071">
    <property type="entry name" value="HOMEOBOX_2"/>
    <property type="match status" value="1"/>
</dbReference>
<proteinExistence type="inferred from homology"/>
<sequence>SAPDMTGPDGKRARTAYTRYQTLELEKEFHFNRYLTRRRRIEIAHA</sequence>
<gene>
    <name type="primary">HOXB5</name>
    <name type="synonym">HOX-2.1</name>
</gene>
<evidence type="ECO:0000255" key="1">
    <source>
        <dbReference type="PROSITE-ProRule" id="PRU00108"/>
    </source>
</evidence>
<evidence type="ECO:0000305" key="2"/>
<feature type="chain" id="PRO_0000200130" description="Homeobox protein Hox-B5">
    <location>
        <begin position="1" status="less than"/>
        <end position="46" status="greater than"/>
    </location>
</feature>
<feature type="DNA-binding region" description="Homeobox" evidence="1">
    <location>
        <begin position="10"/>
        <end position="46" status="greater than"/>
    </location>
</feature>
<feature type="non-terminal residue">
    <location>
        <position position="1"/>
    </location>
</feature>
<feature type="non-terminal residue">
    <location>
        <position position="46"/>
    </location>
</feature>
<comment type="function">
    <text>Sequence-specific transcription factor which is part of a developmental regulatory system that provides cells with specific positional identities on the anterior-posterior axis.</text>
</comment>
<comment type="subcellular location">
    <subcellularLocation>
        <location>Nucleus</location>
    </subcellularLocation>
</comment>
<comment type="similarity">
    <text evidence="2">Belongs to the Antp homeobox family.</text>
</comment>
<name>HXB5_SHEEP</name>
<keyword id="KW-0217">Developmental protein</keyword>
<keyword id="KW-0238">DNA-binding</keyword>
<keyword id="KW-0371">Homeobox</keyword>
<keyword id="KW-0539">Nucleus</keyword>
<keyword id="KW-1185">Reference proteome</keyword>
<keyword id="KW-0804">Transcription</keyword>
<keyword id="KW-0805">Transcription regulation</keyword>
<accession>P14157</accession>
<reference key="1">
    <citation type="journal article" date="1988" name="Gene">
        <title>Molecular cloning and characterization of ovine homeo-box-containing genes.</title>
        <authorList>
            <person name="Choi C.-L."/>
            <person name="Hudson P."/>
            <person name="Stauder A."/>
            <person name="Pietersz G."/>
            <person name="Brandon M."/>
        </authorList>
    </citation>
    <scope>NUCLEOTIDE SEQUENCE [GENOMIC DNA]</scope>
</reference>